<proteinExistence type="inferred from homology"/>
<sequence length="505" mass="54765">MSQHVMFNAVLSSHPALFIQGEWRIGNGVSFEKQDPMSQQRLWQARAADHTDVTLACHAARAAFPAWARASLEQRATVIQQFAALLEQHKQSLARTISLETSKPYWETLTEVQAMIGKVAISLQAYQTRTGHSQTPMGDSMSVLRHRPHGVLAVFGPYNFPGHLPNGHIVPALLAGNTVVFKPSELTPWTAEETVKLWQQAGIPDGVLNLVQGGRETGEALAAQPDIDGLLFTGSAHTGYHLHRQLAGQPEKMLALEMGGNNALIVEQVKDRDAVVNLAIQSAFISAGQRCTCSRRLLVKTGAEGDAFLLRFTAVAQALRIGRWDEQPAPFMGAVISSQAAERMLAAQQHLLLLGGESLLNMTRPDSQSALLTPGIIDITNISEVPDEEYFGPLVSVIRYTDFTEALKIANQTRFGLAVGLVSEDRQQFEQLLLEARAGIVNWNKPLTGASSAAPFGGVGASGNHRPSAFYAADYCAWPMASLECEHLTLPATLSPGISFDLPKV</sequence>
<accession>Q9ZC68</accession>
<accession>Q74UK4</accession>
<accession>Q7CI72</accession>
<evidence type="ECO:0000255" key="1">
    <source>
        <dbReference type="HAMAP-Rule" id="MF_01174"/>
    </source>
</evidence>
<feature type="chain" id="PRO_0000262436" description="N-succinylglutamate 5-semialdehyde dehydrogenase">
    <location>
        <begin position="1"/>
        <end position="505"/>
    </location>
</feature>
<feature type="active site" evidence="1">
    <location>
        <position position="257"/>
    </location>
</feature>
<feature type="active site" evidence="1">
    <location>
        <position position="291"/>
    </location>
</feature>
<feature type="binding site" evidence="1">
    <location>
        <begin position="234"/>
        <end position="239"/>
    </location>
    <ligand>
        <name>NAD(+)</name>
        <dbReference type="ChEBI" id="CHEBI:57540"/>
    </ligand>
</feature>
<comment type="function">
    <text evidence="1">Catalyzes the NAD-dependent reduction of succinylglutamate semialdehyde into succinylglutamate.</text>
</comment>
<comment type="catalytic activity">
    <reaction evidence="1">
        <text>N-succinyl-L-glutamate 5-semialdehyde + NAD(+) + H2O = N-succinyl-L-glutamate + NADH + 2 H(+)</text>
        <dbReference type="Rhea" id="RHEA:10812"/>
        <dbReference type="ChEBI" id="CHEBI:15377"/>
        <dbReference type="ChEBI" id="CHEBI:15378"/>
        <dbReference type="ChEBI" id="CHEBI:57540"/>
        <dbReference type="ChEBI" id="CHEBI:57945"/>
        <dbReference type="ChEBI" id="CHEBI:58520"/>
        <dbReference type="ChEBI" id="CHEBI:58763"/>
        <dbReference type="EC" id="1.2.1.71"/>
    </reaction>
</comment>
<comment type="pathway">
    <text evidence="1">Amino-acid degradation; L-arginine degradation via AST pathway; L-glutamate and succinate from L-arginine: step 4/5.</text>
</comment>
<comment type="similarity">
    <text evidence="1">Belongs to the aldehyde dehydrogenase family. AstD subfamily.</text>
</comment>
<keyword id="KW-0056">Arginine metabolism</keyword>
<keyword id="KW-0520">NAD</keyword>
<keyword id="KW-0560">Oxidoreductase</keyword>
<keyword id="KW-1185">Reference proteome</keyword>
<gene>
    <name evidence="1" type="primary">astD</name>
    <name type="ordered locus">YPO1964</name>
    <name type="ordered locus">y2347</name>
    <name type="ordered locus">YP_1709</name>
</gene>
<reference key="1">
    <citation type="submission" date="1998-10" db="EMBL/GenBank/DDBJ databases">
        <title>DNA sequence of the 102 kbases unstable region of Yersinia pestis.</title>
        <authorList>
            <person name="Buchrieser C."/>
            <person name="Rusniok C."/>
            <person name="Couve E."/>
            <person name="Frangeul L."/>
            <person name="Billault A."/>
            <person name="Kunst F."/>
            <person name="Carniel E."/>
            <person name="Glaser P."/>
        </authorList>
    </citation>
    <scope>NUCLEOTIDE SEQUENCE [GENOMIC DNA]</scope>
    <source>
        <strain>6/69</strain>
    </source>
</reference>
<reference key="2">
    <citation type="journal article" date="2001" name="Nature">
        <title>Genome sequence of Yersinia pestis, the causative agent of plague.</title>
        <authorList>
            <person name="Parkhill J."/>
            <person name="Wren B.W."/>
            <person name="Thomson N.R."/>
            <person name="Titball R.W."/>
            <person name="Holden M.T.G."/>
            <person name="Prentice M.B."/>
            <person name="Sebaihia M."/>
            <person name="James K.D."/>
            <person name="Churcher C.M."/>
            <person name="Mungall K.L."/>
            <person name="Baker S."/>
            <person name="Basham D."/>
            <person name="Bentley S.D."/>
            <person name="Brooks K."/>
            <person name="Cerdeno-Tarraga A.-M."/>
            <person name="Chillingworth T."/>
            <person name="Cronin A."/>
            <person name="Davies R.M."/>
            <person name="Davis P."/>
            <person name="Dougan G."/>
            <person name="Feltwell T."/>
            <person name="Hamlin N."/>
            <person name="Holroyd S."/>
            <person name="Jagels K."/>
            <person name="Karlyshev A.V."/>
            <person name="Leather S."/>
            <person name="Moule S."/>
            <person name="Oyston P.C.F."/>
            <person name="Quail M.A."/>
            <person name="Rutherford K.M."/>
            <person name="Simmonds M."/>
            <person name="Skelton J."/>
            <person name="Stevens K."/>
            <person name="Whitehead S."/>
            <person name="Barrell B.G."/>
        </authorList>
    </citation>
    <scope>NUCLEOTIDE SEQUENCE [LARGE SCALE GENOMIC DNA]</scope>
    <source>
        <strain>CO-92 / Biovar Orientalis</strain>
    </source>
</reference>
<reference key="3">
    <citation type="journal article" date="2002" name="J. Bacteriol.">
        <title>Genome sequence of Yersinia pestis KIM.</title>
        <authorList>
            <person name="Deng W."/>
            <person name="Burland V."/>
            <person name="Plunkett G. III"/>
            <person name="Boutin A."/>
            <person name="Mayhew G.F."/>
            <person name="Liss P."/>
            <person name="Perna N.T."/>
            <person name="Rose D.J."/>
            <person name="Mau B."/>
            <person name="Zhou S."/>
            <person name="Schwartz D.C."/>
            <person name="Fetherston J.D."/>
            <person name="Lindler L.E."/>
            <person name="Brubaker R.R."/>
            <person name="Plano G.V."/>
            <person name="Straley S.C."/>
            <person name="McDonough K.A."/>
            <person name="Nilles M.L."/>
            <person name="Matson J.S."/>
            <person name="Blattner F.R."/>
            <person name="Perry R.D."/>
        </authorList>
    </citation>
    <scope>NUCLEOTIDE SEQUENCE [LARGE SCALE GENOMIC DNA]</scope>
    <source>
        <strain>KIM10+ / Biovar Mediaevalis</strain>
    </source>
</reference>
<reference key="4">
    <citation type="journal article" date="2004" name="DNA Res.">
        <title>Complete genome sequence of Yersinia pestis strain 91001, an isolate avirulent to humans.</title>
        <authorList>
            <person name="Song Y."/>
            <person name="Tong Z."/>
            <person name="Wang J."/>
            <person name="Wang L."/>
            <person name="Guo Z."/>
            <person name="Han Y."/>
            <person name="Zhang J."/>
            <person name="Pei D."/>
            <person name="Zhou D."/>
            <person name="Qin H."/>
            <person name="Pang X."/>
            <person name="Han Y."/>
            <person name="Zhai J."/>
            <person name="Li M."/>
            <person name="Cui B."/>
            <person name="Qi Z."/>
            <person name="Jin L."/>
            <person name="Dai R."/>
            <person name="Chen F."/>
            <person name="Li S."/>
            <person name="Ye C."/>
            <person name="Du Z."/>
            <person name="Lin W."/>
            <person name="Wang J."/>
            <person name="Yu J."/>
            <person name="Yang H."/>
            <person name="Wang J."/>
            <person name="Huang P."/>
            <person name="Yang R."/>
        </authorList>
    </citation>
    <scope>NUCLEOTIDE SEQUENCE [LARGE SCALE GENOMIC DNA]</scope>
    <source>
        <strain>91001 / Biovar Mediaevalis</strain>
    </source>
</reference>
<protein>
    <recommendedName>
        <fullName evidence="1">N-succinylglutamate 5-semialdehyde dehydrogenase</fullName>
        <ecNumber evidence="1">1.2.1.71</ecNumber>
    </recommendedName>
    <alternativeName>
        <fullName evidence="1">Succinylglutamic semialdehyde dehydrogenase</fullName>
        <shortName evidence="1">SGSD</shortName>
    </alternativeName>
</protein>
<name>ASTD_YERPE</name>
<organism>
    <name type="scientific">Yersinia pestis</name>
    <dbReference type="NCBI Taxonomy" id="632"/>
    <lineage>
        <taxon>Bacteria</taxon>
        <taxon>Pseudomonadati</taxon>
        <taxon>Pseudomonadota</taxon>
        <taxon>Gammaproteobacteria</taxon>
        <taxon>Enterobacterales</taxon>
        <taxon>Yersiniaceae</taxon>
        <taxon>Yersinia</taxon>
    </lineage>
</organism>
<dbReference type="EC" id="1.2.1.71" evidence="1"/>
<dbReference type="EMBL" id="AL031866">
    <property type="protein sequence ID" value="CAA21339.1"/>
    <property type="molecule type" value="Genomic_DNA"/>
</dbReference>
<dbReference type="EMBL" id="AL590842">
    <property type="protein sequence ID" value="CAL20602.1"/>
    <property type="molecule type" value="Genomic_DNA"/>
</dbReference>
<dbReference type="EMBL" id="AE009952">
    <property type="protein sequence ID" value="AAM85905.1"/>
    <property type="molecule type" value="Genomic_DNA"/>
</dbReference>
<dbReference type="EMBL" id="AE017042">
    <property type="protein sequence ID" value="AAS61938.1"/>
    <property type="molecule type" value="Genomic_DNA"/>
</dbReference>
<dbReference type="PIR" id="AG0239">
    <property type="entry name" value="AG0239"/>
</dbReference>
<dbReference type="PIR" id="T46996">
    <property type="entry name" value="T46996"/>
</dbReference>
<dbReference type="RefSeq" id="WP_002212030.1">
    <property type="nucleotide sequence ID" value="NZ_WUCM01000003.1"/>
</dbReference>
<dbReference type="RefSeq" id="YP_002346953.1">
    <property type="nucleotide sequence ID" value="NC_003143.1"/>
</dbReference>
<dbReference type="SMR" id="Q9ZC68"/>
<dbReference type="IntAct" id="Q9ZC68">
    <property type="interactions" value="12"/>
</dbReference>
<dbReference type="STRING" id="214092.YPO1964"/>
<dbReference type="PaxDb" id="214092-YPO1964"/>
<dbReference type="DNASU" id="1147294"/>
<dbReference type="EnsemblBacteria" id="AAS61938">
    <property type="protein sequence ID" value="AAS61938"/>
    <property type="gene ID" value="YP_1709"/>
</dbReference>
<dbReference type="KEGG" id="ype:YPO1964"/>
<dbReference type="KEGG" id="ypk:y2347"/>
<dbReference type="KEGG" id="ypm:YP_1709"/>
<dbReference type="PATRIC" id="fig|214092.21.peg.2341"/>
<dbReference type="eggNOG" id="COG1012">
    <property type="taxonomic scope" value="Bacteria"/>
</dbReference>
<dbReference type="HOGENOM" id="CLU_005391_1_0_6"/>
<dbReference type="OMA" id="NWNKQLT"/>
<dbReference type="OrthoDB" id="9812625at2"/>
<dbReference type="UniPathway" id="UPA00185">
    <property type="reaction ID" value="UER00282"/>
</dbReference>
<dbReference type="Proteomes" id="UP000000815">
    <property type="component" value="Chromosome"/>
</dbReference>
<dbReference type="Proteomes" id="UP000001019">
    <property type="component" value="Chromosome"/>
</dbReference>
<dbReference type="Proteomes" id="UP000002490">
    <property type="component" value="Chromosome"/>
</dbReference>
<dbReference type="GO" id="GO:0043824">
    <property type="term" value="F:succinylglutamate-semialdehyde dehydrogenase activity"/>
    <property type="evidence" value="ECO:0007669"/>
    <property type="project" value="UniProtKB-EC"/>
</dbReference>
<dbReference type="GO" id="GO:0019544">
    <property type="term" value="P:arginine catabolic process to glutamate"/>
    <property type="evidence" value="ECO:0007669"/>
    <property type="project" value="UniProtKB-UniRule"/>
</dbReference>
<dbReference type="GO" id="GO:0019545">
    <property type="term" value="P:arginine catabolic process to succinate"/>
    <property type="evidence" value="ECO:0007669"/>
    <property type="project" value="UniProtKB-UniRule"/>
</dbReference>
<dbReference type="CDD" id="cd07095">
    <property type="entry name" value="ALDH_SGSD_AstD"/>
    <property type="match status" value="1"/>
</dbReference>
<dbReference type="FunFam" id="3.40.309.10:FF:000013">
    <property type="entry name" value="N-succinylglutamate 5-semialdehyde dehydrogenase"/>
    <property type="match status" value="1"/>
</dbReference>
<dbReference type="FunFam" id="3.40.605.10:FF:000010">
    <property type="entry name" value="N-succinylglutamate 5-semialdehyde dehydrogenase"/>
    <property type="match status" value="1"/>
</dbReference>
<dbReference type="Gene3D" id="3.40.605.10">
    <property type="entry name" value="Aldehyde Dehydrogenase, Chain A, domain 1"/>
    <property type="match status" value="1"/>
</dbReference>
<dbReference type="Gene3D" id="3.40.309.10">
    <property type="entry name" value="Aldehyde Dehydrogenase, Chain A, domain 2"/>
    <property type="match status" value="1"/>
</dbReference>
<dbReference type="HAMAP" id="MF_01174">
    <property type="entry name" value="Aldedh_AstD"/>
    <property type="match status" value="1"/>
</dbReference>
<dbReference type="InterPro" id="IPR016161">
    <property type="entry name" value="Ald_DH/histidinol_DH"/>
</dbReference>
<dbReference type="InterPro" id="IPR016163">
    <property type="entry name" value="Ald_DH_C"/>
</dbReference>
<dbReference type="InterPro" id="IPR016160">
    <property type="entry name" value="Ald_DH_CS_CYS"/>
</dbReference>
<dbReference type="InterPro" id="IPR029510">
    <property type="entry name" value="Ald_DH_CS_GLU"/>
</dbReference>
<dbReference type="InterPro" id="IPR016162">
    <property type="entry name" value="Ald_DH_N"/>
</dbReference>
<dbReference type="InterPro" id="IPR015590">
    <property type="entry name" value="Aldehyde_DH_dom"/>
</dbReference>
<dbReference type="InterPro" id="IPR017649">
    <property type="entry name" value="SuccinylGlu_semiald_DH_AstD"/>
</dbReference>
<dbReference type="NCBIfam" id="TIGR03240">
    <property type="entry name" value="arg_catab_astD"/>
    <property type="match status" value="1"/>
</dbReference>
<dbReference type="NCBIfam" id="NF006992">
    <property type="entry name" value="PRK09457.1"/>
    <property type="match status" value="1"/>
</dbReference>
<dbReference type="PANTHER" id="PTHR11699">
    <property type="entry name" value="ALDEHYDE DEHYDROGENASE-RELATED"/>
    <property type="match status" value="1"/>
</dbReference>
<dbReference type="Pfam" id="PF00171">
    <property type="entry name" value="Aldedh"/>
    <property type="match status" value="1"/>
</dbReference>
<dbReference type="SUPFAM" id="SSF53720">
    <property type="entry name" value="ALDH-like"/>
    <property type="match status" value="1"/>
</dbReference>
<dbReference type="PROSITE" id="PS00070">
    <property type="entry name" value="ALDEHYDE_DEHYDR_CYS"/>
    <property type="match status" value="1"/>
</dbReference>
<dbReference type="PROSITE" id="PS00687">
    <property type="entry name" value="ALDEHYDE_DEHYDR_GLU"/>
    <property type="match status" value="1"/>
</dbReference>